<comment type="function">
    <text evidence="1">Catalyzes the methylthiolation of an aspartic acid residue of ribosomal protein uS12.</text>
</comment>
<comment type="catalytic activity">
    <reaction evidence="1">
        <text>L-aspartate(89)-[ribosomal protein uS12]-hydrogen + (sulfur carrier)-SH + AH2 + 2 S-adenosyl-L-methionine = 3-methylsulfanyl-L-aspartate(89)-[ribosomal protein uS12]-hydrogen + (sulfur carrier)-H + 5'-deoxyadenosine + L-methionine + A + S-adenosyl-L-homocysteine + 2 H(+)</text>
        <dbReference type="Rhea" id="RHEA:37087"/>
        <dbReference type="Rhea" id="RHEA-COMP:10460"/>
        <dbReference type="Rhea" id="RHEA-COMP:10461"/>
        <dbReference type="Rhea" id="RHEA-COMP:14737"/>
        <dbReference type="Rhea" id="RHEA-COMP:14739"/>
        <dbReference type="ChEBI" id="CHEBI:13193"/>
        <dbReference type="ChEBI" id="CHEBI:15378"/>
        <dbReference type="ChEBI" id="CHEBI:17319"/>
        <dbReference type="ChEBI" id="CHEBI:17499"/>
        <dbReference type="ChEBI" id="CHEBI:29917"/>
        <dbReference type="ChEBI" id="CHEBI:29961"/>
        <dbReference type="ChEBI" id="CHEBI:57844"/>
        <dbReference type="ChEBI" id="CHEBI:57856"/>
        <dbReference type="ChEBI" id="CHEBI:59789"/>
        <dbReference type="ChEBI" id="CHEBI:64428"/>
        <dbReference type="ChEBI" id="CHEBI:73599"/>
        <dbReference type="EC" id="2.8.4.4"/>
    </reaction>
</comment>
<comment type="cofactor">
    <cofactor evidence="1">
        <name>[4Fe-4S] cluster</name>
        <dbReference type="ChEBI" id="CHEBI:49883"/>
    </cofactor>
    <text evidence="1">Binds 2 [4Fe-4S] clusters. One cluster is coordinated with 3 cysteines and an exchangeable S-adenosyl-L-methionine.</text>
</comment>
<comment type="subcellular location">
    <subcellularLocation>
        <location evidence="1">Cytoplasm</location>
    </subcellularLocation>
</comment>
<comment type="similarity">
    <text evidence="1">Belongs to the methylthiotransferase family. RimO subfamily.</text>
</comment>
<reference key="1">
    <citation type="journal article" date="2002" name="Proc. Natl. Acad. Sci. U.S.A.">
        <title>The Brucella suis genome reveals fundamental similarities between animal and plant pathogens and symbionts.</title>
        <authorList>
            <person name="Paulsen I.T."/>
            <person name="Seshadri R."/>
            <person name="Nelson K.E."/>
            <person name="Eisen J.A."/>
            <person name="Heidelberg J.F."/>
            <person name="Read T.D."/>
            <person name="Dodson R.J."/>
            <person name="Umayam L.A."/>
            <person name="Brinkac L.M."/>
            <person name="Beanan M.J."/>
            <person name="Daugherty S.C."/>
            <person name="DeBoy R.T."/>
            <person name="Durkin A.S."/>
            <person name="Kolonay J.F."/>
            <person name="Madupu R."/>
            <person name="Nelson W.C."/>
            <person name="Ayodeji B."/>
            <person name="Kraul M."/>
            <person name="Shetty J."/>
            <person name="Malek J.A."/>
            <person name="Van Aken S.E."/>
            <person name="Riedmuller S."/>
            <person name="Tettelin H."/>
            <person name="Gill S.R."/>
            <person name="White O."/>
            <person name="Salzberg S.L."/>
            <person name="Hoover D.L."/>
            <person name="Lindler L.E."/>
            <person name="Halling S.M."/>
            <person name="Boyle S.M."/>
            <person name="Fraser C.M."/>
        </authorList>
    </citation>
    <scope>NUCLEOTIDE SEQUENCE [LARGE SCALE GENOMIC DNA]</scope>
    <source>
        <strain>1330</strain>
    </source>
</reference>
<reference key="2">
    <citation type="journal article" date="2011" name="J. Bacteriol.">
        <title>Revised genome sequence of Brucella suis 1330.</title>
        <authorList>
            <person name="Tae H."/>
            <person name="Shallom S."/>
            <person name="Settlage R."/>
            <person name="Preston D."/>
            <person name="Adams L.G."/>
            <person name="Garner H.R."/>
        </authorList>
    </citation>
    <scope>NUCLEOTIDE SEQUENCE [LARGE SCALE GENOMIC DNA]</scope>
    <source>
        <strain>1330</strain>
    </source>
</reference>
<organism>
    <name type="scientific">Brucella suis biovar 1 (strain 1330)</name>
    <dbReference type="NCBI Taxonomy" id="204722"/>
    <lineage>
        <taxon>Bacteria</taxon>
        <taxon>Pseudomonadati</taxon>
        <taxon>Pseudomonadota</taxon>
        <taxon>Alphaproteobacteria</taxon>
        <taxon>Hyphomicrobiales</taxon>
        <taxon>Brucellaceae</taxon>
        <taxon>Brucella/Ochrobactrum group</taxon>
        <taxon>Brucella</taxon>
    </lineage>
</organism>
<accession>Q8FW94</accession>
<accession>G0KCU4</accession>
<feature type="chain" id="PRO_0000374726" description="Ribosomal protein uS12 methylthiotransferase RimO">
    <location>
        <begin position="1"/>
        <end position="437"/>
    </location>
</feature>
<feature type="domain" description="MTTase N-terminal" evidence="1">
    <location>
        <begin position="4"/>
        <end position="114"/>
    </location>
</feature>
<feature type="domain" description="Radical SAM core" evidence="2">
    <location>
        <begin position="131"/>
        <end position="369"/>
    </location>
</feature>
<feature type="domain" description="TRAM" evidence="1">
    <location>
        <begin position="372"/>
        <end position="437"/>
    </location>
</feature>
<feature type="binding site" evidence="1">
    <location>
        <position position="13"/>
    </location>
    <ligand>
        <name>[4Fe-4S] cluster</name>
        <dbReference type="ChEBI" id="CHEBI:49883"/>
        <label>1</label>
    </ligand>
</feature>
<feature type="binding site" evidence="1">
    <location>
        <position position="49"/>
    </location>
    <ligand>
        <name>[4Fe-4S] cluster</name>
        <dbReference type="ChEBI" id="CHEBI:49883"/>
        <label>1</label>
    </ligand>
</feature>
<feature type="binding site" evidence="1">
    <location>
        <position position="78"/>
    </location>
    <ligand>
        <name>[4Fe-4S] cluster</name>
        <dbReference type="ChEBI" id="CHEBI:49883"/>
        <label>1</label>
    </ligand>
</feature>
<feature type="binding site" evidence="1">
    <location>
        <position position="145"/>
    </location>
    <ligand>
        <name>[4Fe-4S] cluster</name>
        <dbReference type="ChEBI" id="CHEBI:49883"/>
        <label>2</label>
        <note>4Fe-4S-S-AdoMet</note>
    </ligand>
</feature>
<feature type="binding site" evidence="1">
    <location>
        <position position="149"/>
    </location>
    <ligand>
        <name>[4Fe-4S] cluster</name>
        <dbReference type="ChEBI" id="CHEBI:49883"/>
        <label>2</label>
        <note>4Fe-4S-S-AdoMet</note>
    </ligand>
</feature>
<feature type="binding site" evidence="1">
    <location>
        <position position="152"/>
    </location>
    <ligand>
        <name>[4Fe-4S] cluster</name>
        <dbReference type="ChEBI" id="CHEBI:49883"/>
        <label>2</label>
        <note>4Fe-4S-S-AdoMet</note>
    </ligand>
</feature>
<protein>
    <recommendedName>
        <fullName evidence="1">Ribosomal protein uS12 methylthiotransferase RimO</fullName>
        <shortName evidence="1">uS12 MTTase</shortName>
        <shortName evidence="1">uS12 methylthiotransferase</shortName>
        <ecNumber evidence="1">2.8.4.4</ecNumber>
    </recommendedName>
    <alternativeName>
        <fullName evidence="1">Ribosomal protein uS12 (aspartate-C(3))-methylthiotransferase</fullName>
    </alternativeName>
    <alternativeName>
        <fullName evidence="1">Ribosome maturation factor RimO</fullName>
    </alternativeName>
</protein>
<dbReference type="EC" id="2.8.4.4" evidence="1"/>
<dbReference type="EMBL" id="AE014292">
    <property type="protein sequence ID" value="AAN33755.1"/>
    <property type="molecule type" value="Genomic_DNA"/>
</dbReference>
<dbReference type="EMBL" id="CP002998">
    <property type="protein sequence ID" value="AEM20032.1"/>
    <property type="molecule type" value="Genomic_DNA"/>
</dbReference>
<dbReference type="PIR" id="AF3597">
    <property type="entry name" value="AF3597"/>
</dbReference>
<dbReference type="RefSeq" id="WP_002966068.1">
    <property type="nucleotide sequence ID" value="NZ_KN046805.1"/>
</dbReference>
<dbReference type="SMR" id="Q8FW94"/>
<dbReference type="GeneID" id="93015440"/>
<dbReference type="KEGG" id="bms:BRA0566"/>
<dbReference type="KEGG" id="bsi:BS1330_II0561"/>
<dbReference type="PATRIC" id="fig|204722.21.peg.580"/>
<dbReference type="HOGENOM" id="CLU_018697_0_0_5"/>
<dbReference type="PhylomeDB" id="Q8FW94"/>
<dbReference type="Proteomes" id="UP000007104">
    <property type="component" value="Chromosome II"/>
</dbReference>
<dbReference type="GO" id="GO:0005829">
    <property type="term" value="C:cytosol"/>
    <property type="evidence" value="ECO:0007669"/>
    <property type="project" value="TreeGrafter"/>
</dbReference>
<dbReference type="GO" id="GO:0051539">
    <property type="term" value="F:4 iron, 4 sulfur cluster binding"/>
    <property type="evidence" value="ECO:0007669"/>
    <property type="project" value="UniProtKB-UniRule"/>
</dbReference>
<dbReference type="GO" id="GO:0035599">
    <property type="term" value="F:aspartic acid methylthiotransferase activity"/>
    <property type="evidence" value="ECO:0007669"/>
    <property type="project" value="TreeGrafter"/>
</dbReference>
<dbReference type="GO" id="GO:0046872">
    <property type="term" value="F:metal ion binding"/>
    <property type="evidence" value="ECO:0007669"/>
    <property type="project" value="UniProtKB-KW"/>
</dbReference>
<dbReference type="GO" id="GO:0103039">
    <property type="term" value="F:protein methylthiotransferase activity"/>
    <property type="evidence" value="ECO:0007669"/>
    <property type="project" value="UniProtKB-EC"/>
</dbReference>
<dbReference type="GO" id="GO:0006400">
    <property type="term" value="P:tRNA modification"/>
    <property type="evidence" value="ECO:0007669"/>
    <property type="project" value="InterPro"/>
</dbReference>
<dbReference type="CDD" id="cd01335">
    <property type="entry name" value="Radical_SAM"/>
    <property type="match status" value="1"/>
</dbReference>
<dbReference type="FunFam" id="3.40.50.12160:FF:000002">
    <property type="entry name" value="Ribosomal protein S12 methylthiotransferase RimO"/>
    <property type="match status" value="1"/>
</dbReference>
<dbReference type="FunFam" id="3.80.30.20:FF:000001">
    <property type="entry name" value="tRNA-2-methylthio-N(6)-dimethylallyladenosine synthase 2"/>
    <property type="match status" value="1"/>
</dbReference>
<dbReference type="Gene3D" id="3.40.50.12160">
    <property type="entry name" value="Methylthiotransferase, N-terminal domain"/>
    <property type="match status" value="1"/>
</dbReference>
<dbReference type="Gene3D" id="2.40.50.140">
    <property type="entry name" value="Nucleic acid-binding proteins"/>
    <property type="match status" value="1"/>
</dbReference>
<dbReference type="Gene3D" id="3.80.30.20">
    <property type="entry name" value="tm_1862 like domain"/>
    <property type="match status" value="1"/>
</dbReference>
<dbReference type="HAMAP" id="MF_01865">
    <property type="entry name" value="MTTase_RimO"/>
    <property type="match status" value="1"/>
</dbReference>
<dbReference type="InterPro" id="IPR006638">
    <property type="entry name" value="Elp3/MiaA/NifB-like_rSAM"/>
</dbReference>
<dbReference type="InterPro" id="IPR005839">
    <property type="entry name" value="Methylthiotransferase"/>
</dbReference>
<dbReference type="InterPro" id="IPR020612">
    <property type="entry name" value="Methylthiotransferase_CS"/>
</dbReference>
<dbReference type="InterPro" id="IPR013848">
    <property type="entry name" value="Methylthiotransferase_N"/>
</dbReference>
<dbReference type="InterPro" id="IPR038135">
    <property type="entry name" value="Methylthiotransferase_N_sf"/>
</dbReference>
<dbReference type="InterPro" id="IPR012340">
    <property type="entry name" value="NA-bd_OB-fold"/>
</dbReference>
<dbReference type="InterPro" id="IPR005840">
    <property type="entry name" value="Ribosomal_uS12_MeSTrfase_RimO"/>
</dbReference>
<dbReference type="InterPro" id="IPR007197">
    <property type="entry name" value="rSAM"/>
</dbReference>
<dbReference type="InterPro" id="IPR023404">
    <property type="entry name" value="rSAM_horseshoe"/>
</dbReference>
<dbReference type="InterPro" id="IPR002792">
    <property type="entry name" value="TRAM_dom"/>
</dbReference>
<dbReference type="NCBIfam" id="TIGR01125">
    <property type="entry name" value="30S ribosomal protein S12 methylthiotransferase RimO"/>
    <property type="match status" value="1"/>
</dbReference>
<dbReference type="NCBIfam" id="TIGR00089">
    <property type="entry name" value="MiaB/RimO family radical SAM methylthiotransferase"/>
    <property type="match status" value="1"/>
</dbReference>
<dbReference type="PANTHER" id="PTHR43837">
    <property type="entry name" value="RIBOSOMAL PROTEIN S12 METHYLTHIOTRANSFERASE RIMO"/>
    <property type="match status" value="1"/>
</dbReference>
<dbReference type="PANTHER" id="PTHR43837:SF1">
    <property type="entry name" value="RIBOSOMAL PROTEIN US12 METHYLTHIOTRANSFERASE RIMO"/>
    <property type="match status" value="1"/>
</dbReference>
<dbReference type="Pfam" id="PF04055">
    <property type="entry name" value="Radical_SAM"/>
    <property type="match status" value="1"/>
</dbReference>
<dbReference type="Pfam" id="PF18693">
    <property type="entry name" value="TRAM_2"/>
    <property type="match status" value="1"/>
</dbReference>
<dbReference type="Pfam" id="PF00919">
    <property type="entry name" value="UPF0004"/>
    <property type="match status" value="1"/>
</dbReference>
<dbReference type="SFLD" id="SFLDG01082">
    <property type="entry name" value="B12-binding_domain_containing"/>
    <property type="match status" value="1"/>
</dbReference>
<dbReference type="SFLD" id="SFLDG01061">
    <property type="entry name" value="methylthiotransferase"/>
    <property type="match status" value="1"/>
</dbReference>
<dbReference type="SFLD" id="SFLDF00274">
    <property type="entry name" value="ribosomal_protein_S12_methylth"/>
    <property type="match status" value="1"/>
</dbReference>
<dbReference type="SMART" id="SM00729">
    <property type="entry name" value="Elp3"/>
    <property type="match status" value="1"/>
</dbReference>
<dbReference type="SUPFAM" id="SSF102114">
    <property type="entry name" value="Radical SAM enzymes"/>
    <property type="match status" value="1"/>
</dbReference>
<dbReference type="PROSITE" id="PS51449">
    <property type="entry name" value="MTTASE_N"/>
    <property type="match status" value="1"/>
</dbReference>
<dbReference type="PROSITE" id="PS01278">
    <property type="entry name" value="MTTASE_RADICAL"/>
    <property type="match status" value="1"/>
</dbReference>
<dbReference type="PROSITE" id="PS51918">
    <property type="entry name" value="RADICAL_SAM"/>
    <property type="match status" value="1"/>
</dbReference>
<dbReference type="PROSITE" id="PS50926">
    <property type="entry name" value="TRAM"/>
    <property type="match status" value="1"/>
</dbReference>
<name>RIMO_BRUSU</name>
<evidence type="ECO:0000255" key="1">
    <source>
        <dbReference type="HAMAP-Rule" id="MF_01865"/>
    </source>
</evidence>
<evidence type="ECO:0000255" key="2">
    <source>
        <dbReference type="PROSITE-ProRule" id="PRU01266"/>
    </source>
</evidence>
<gene>
    <name evidence="1" type="primary">rimO</name>
    <name type="ordered locus">BRA0566</name>
    <name type="ordered locus">BS1330_II0561</name>
</gene>
<proteinExistence type="inferred from homology"/>
<sequence length="437" mass="48774">MSAPRVSFVSLGCPKALVDSERIITGLRSEGYEISRKHDGADLVIVNTCGFLDSARDESLEAIGLALNENGKVIVTGCLGAEPDVIRERHPNVLAITGPQAYESVMNAVHEVAPPAHDPFVDLVPPQGVKLTPRHYAYLKISEGCSNRCSFCIIPALRGDLVSRPINEVLREAEKLVQAGVKEILVISQDTSAYGLDIKYQEAMWQDRTVRTKFLDLSRELGEMGVWVRMHYVYPYPHVDEVIPLMAEGKILPYLDIPFQHASPAVLKNMRRPAHQEKTSRRIQAWRETCPDLAVRSTFIVGYPGETEEDFQMLLDWLDEAKIERAGCFKYEAVKGAKANDLGLEQVPEEVKEARWHRFMAKQQQISTNLLKKKVGKRLPVIIDEANGTIGKGRTRYDAPEIDGSVHISSRRPLRVGDIVTVKIEASDAYDLHGTAV</sequence>
<keyword id="KW-0004">4Fe-4S</keyword>
<keyword id="KW-0963">Cytoplasm</keyword>
<keyword id="KW-0408">Iron</keyword>
<keyword id="KW-0411">Iron-sulfur</keyword>
<keyword id="KW-0479">Metal-binding</keyword>
<keyword id="KW-0949">S-adenosyl-L-methionine</keyword>
<keyword id="KW-0808">Transferase</keyword>